<organism>
    <name type="scientific">Mycobacterium leprae (strain TN)</name>
    <dbReference type="NCBI Taxonomy" id="272631"/>
    <lineage>
        <taxon>Bacteria</taxon>
        <taxon>Bacillati</taxon>
        <taxon>Actinomycetota</taxon>
        <taxon>Actinomycetes</taxon>
        <taxon>Mycobacteriales</taxon>
        <taxon>Mycobacteriaceae</taxon>
        <taxon>Mycobacterium</taxon>
    </lineage>
</organism>
<sequence>MFEVSAIVFAVSQAAEEGKSSNFLLPNGTFFFVLAIFLVVLGVIGTFVVPPILKVLQERDAMVAKTDADSKMSAAQFAAAQADYEAAMKEARVQSSFLRDNARVDGRKSIEEARVRAEQHVVSTLQIAGEQIKRERDAVELDLRAKAGAMSLILASRILGVDITASVVTR</sequence>
<feature type="chain" id="PRO_0000082380" description="ATP synthase subunit b">
    <location>
        <begin position="1"/>
        <end position="170"/>
    </location>
</feature>
<feature type="transmembrane region" description="Helical" evidence="1">
    <location>
        <begin position="30"/>
        <end position="50"/>
    </location>
</feature>
<gene>
    <name evidence="1" type="primary">atpF</name>
    <name type="ordered locus">ML1141</name>
</gene>
<comment type="function">
    <text evidence="1">F(1)F(0) ATP synthase produces ATP from ADP in the presence of a proton or sodium gradient. F-type ATPases consist of two structural domains, F(1) containing the extramembraneous catalytic core and F(0) containing the membrane proton channel, linked together by a central stalk and a peripheral stalk. During catalysis, ATP synthesis in the catalytic domain of F(1) is coupled via a rotary mechanism of the central stalk subunits to proton translocation.</text>
</comment>
<comment type="function">
    <text evidence="1">Component of the F(0) channel, it forms part of the peripheral stalk, linking F(1) to F(0).</text>
</comment>
<comment type="subunit">
    <text evidence="1">F-type ATPases have 2 components, F(1) - the catalytic core - and F(0) - the membrane proton channel. F(1) has five subunits: alpha(3), beta(3), gamma(1), delta(1), epsilon(1). F(0) has three main subunits: a(1), b(2) and c(10-14). The alpha and beta chains form an alternating ring which encloses part of the gamma chain. F(1) is attached to F(0) by a central stalk formed by the gamma and epsilon chains, while a peripheral stalk is formed by the delta and b chains.</text>
</comment>
<comment type="subcellular location">
    <subcellularLocation>
        <location evidence="1">Cell membrane</location>
        <topology evidence="1">Single-pass membrane protein</topology>
    </subcellularLocation>
</comment>
<comment type="similarity">
    <text evidence="1">Belongs to the ATPase B chain family.</text>
</comment>
<reference key="1">
    <citation type="submission" date="1994-09" db="EMBL/GenBank/DDBJ databases">
        <authorList>
            <person name="Smith D.R."/>
            <person name="Robison K."/>
        </authorList>
    </citation>
    <scope>NUCLEOTIDE SEQUENCE [GENOMIC DNA]</scope>
</reference>
<reference key="2">
    <citation type="journal article" date="2001" name="Nature">
        <title>Massive gene decay in the leprosy bacillus.</title>
        <authorList>
            <person name="Cole S.T."/>
            <person name="Eiglmeier K."/>
            <person name="Parkhill J."/>
            <person name="James K.D."/>
            <person name="Thomson N.R."/>
            <person name="Wheeler P.R."/>
            <person name="Honore N."/>
            <person name="Garnier T."/>
            <person name="Churcher C.M."/>
            <person name="Harris D.E."/>
            <person name="Mungall K.L."/>
            <person name="Basham D."/>
            <person name="Brown D."/>
            <person name="Chillingworth T."/>
            <person name="Connor R."/>
            <person name="Davies R.M."/>
            <person name="Devlin K."/>
            <person name="Duthoy S."/>
            <person name="Feltwell T."/>
            <person name="Fraser A."/>
            <person name="Hamlin N."/>
            <person name="Holroyd S."/>
            <person name="Hornsby T."/>
            <person name="Jagels K."/>
            <person name="Lacroix C."/>
            <person name="Maclean J."/>
            <person name="Moule S."/>
            <person name="Murphy L.D."/>
            <person name="Oliver K."/>
            <person name="Quail M.A."/>
            <person name="Rajandream M.A."/>
            <person name="Rutherford K.M."/>
            <person name="Rutter S."/>
            <person name="Seeger K."/>
            <person name="Simon S."/>
            <person name="Simmonds M."/>
            <person name="Skelton J."/>
            <person name="Squares R."/>
            <person name="Squares S."/>
            <person name="Stevens K."/>
            <person name="Taylor K."/>
            <person name="Whitehead S."/>
            <person name="Woodward J.R."/>
            <person name="Barrell B.G."/>
        </authorList>
    </citation>
    <scope>NUCLEOTIDE SEQUENCE [LARGE SCALE GENOMIC DNA]</scope>
    <source>
        <strain>TN</strain>
    </source>
</reference>
<dbReference type="EMBL" id="U15186">
    <property type="protein sequence ID" value="AAA63104.1"/>
    <property type="molecule type" value="Genomic_DNA"/>
</dbReference>
<dbReference type="EMBL" id="AL583920">
    <property type="protein sequence ID" value="CAC31522.1"/>
    <property type="molecule type" value="Genomic_DNA"/>
</dbReference>
<dbReference type="PIR" id="T09978">
    <property type="entry name" value="T09978"/>
</dbReference>
<dbReference type="RefSeq" id="NP_301835.1">
    <property type="nucleotide sequence ID" value="NC_002677.1"/>
</dbReference>
<dbReference type="RefSeq" id="WP_010908159.1">
    <property type="nucleotide sequence ID" value="NC_002677.1"/>
</dbReference>
<dbReference type="SMR" id="P45827"/>
<dbReference type="STRING" id="272631.gene:17574968"/>
<dbReference type="KEGG" id="mle:ML1141"/>
<dbReference type="PATRIC" id="fig|272631.5.peg.2063"/>
<dbReference type="Leproma" id="ML1141"/>
<dbReference type="eggNOG" id="COG0711">
    <property type="taxonomic scope" value="Bacteria"/>
</dbReference>
<dbReference type="HOGENOM" id="CLU_079215_5_2_11"/>
<dbReference type="OrthoDB" id="4638851at2"/>
<dbReference type="Proteomes" id="UP000000806">
    <property type="component" value="Chromosome"/>
</dbReference>
<dbReference type="GO" id="GO:0005886">
    <property type="term" value="C:plasma membrane"/>
    <property type="evidence" value="ECO:0007669"/>
    <property type="project" value="UniProtKB-SubCell"/>
</dbReference>
<dbReference type="GO" id="GO:0045259">
    <property type="term" value="C:proton-transporting ATP synthase complex"/>
    <property type="evidence" value="ECO:0007669"/>
    <property type="project" value="UniProtKB-KW"/>
</dbReference>
<dbReference type="GO" id="GO:0046933">
    <property type="term" value="F:proton-transporting ATP synthase activity, rotational mechanism"/>
    <property type="evidence" value="ECO:0007669"/>
    <property type="project" value="UniProtKB-UniRule"/>
</dbReference>
<dbReference type="GO" id="GO:0046961">
    <property type="term" value="F:proton-transporting ATPase activity, rotational mechanism"/>
    <property type="evidence" value="ECO:0007669"/>
    <property type="project" value="TreeGrafter"/>
</dbReference>
<dbReference type="CDD" id="cd06503">
    <property type="entry name" value="ATP-synt_Fo_b"/>
    <property type="match status" value="1"/>
</dbReference>
<dbReference type="HAMAP" id="MF_01398">
    <property type="entry name" value="ATP_synth_b_bprime"/>
    <property type="match status" value="1"/>
</dbReference>
<dbReference type="InterPro" id="IPR028987">
    <property type="entry name" value="ATP_synth_B-like_membr_sf"/>
</dbReference>
<dbReference type="InterPro" id="IPR002146">
    <property type="entry name" value="ATP_synth_b/b'su_bac/chlpt"/>
</dbReference>
<dbReference type="InterPro" id="IPR050059">
    <property type="entry name" value="ATP_synthase_B_chain"/>
</dbReference>
<dbReference type="NCBIfam" id="NF004412">
    <property type="entry name" value="PRK05759.1-3"/>
    <property type="match status" value="1"/>
</dbReference>
<dbReference type="PANTHER" id="PTHR33445:SF1">
    <property type="entry name" value="ATP SYNTHASE SUBUNIT B"/>
    <property type="match status" value="1"/>
</dbReference>
<dbReference type="PANTHER" id="PTHR33445">
    <property type="entry name" value="ATP SYNTHASE SUBUNIT B', CHLOROPLASTIC"/>
    <property type="match status" value="1"/>
</dbReference>
<dbReference type="Pfam" id="PF00430">
    <property type="entry name" value="ATP-synt_B"/>
    <property type="match status" value="1"/>
</dbReference>
<dbReference type="SUPFAM" id="SSF81573">
    <property type="entry name" value="F1F0 ATP synthase subunit B, membrane domain"/>
    <property type="match status" value="1"/>
</dbReference>
<accession>P45827</accession>
<protein>
    <recommendedName>
        <fullName evidence="1">ATP synthase subunit b</fullName>
    </recommendedName>
    <alternativeName>
        <fullName evidence="1">ATP synthase F(0) sector subunit b</fullName>
    </alternativeName>
    <alternativeName>
        <fullName evidence="1">ATPase subunit I</fullName>
    </alternativeName>
    <alternativeName>
        <fullName evidence="1">F-type ATPase subunit b</fullName>
        <shortName evidence="1">F-ATPase subunit b</shortName>
    </alternativeName>
</protein>
<keyword id="KW-0066">ATP synthesis</keyword>
<keyword id="KW-1003">Cell membrane</keyword>
<keyword id="KW-0138">CF(0)</keyword>
<keyword id="KW-0375">Hydrogen ion transport</keyword>
<keyword id="KW-0406">Ion transport</keyword>
<keyword id="KW-0472">Membrane</keyword>
<keyword id="KW-1185">Reference proteome</keyword>
<keyword id="KW-0812">Transmembrane</keyword>
<keyword id="KW-1133">Transmembrane helix</keyword>
<keyword id="KW-0813">Transport</keyword>
<proteinExistence type="inferred from homology"/>
<name>ATPF_MYCLE</name>
<evidence type="ECO:0000255" key="1">
    <source>
        <dbReference type="HAMAP-Rule" id="MF_01398"/>
    </source>
</evidence>